<name>OXYT_RAJCL</name>
<proteinExistence type="evidence at protein level"/>
<dbReference type="GO" id="GO:0005576">
    <property type="term" value="C:extracellular region"/>
    <property type="evidence" value="ECO:0007669"/>
    <property type="project" value="UniProtKB-SubCell"/>
</dbReference>
<dbReference type="GO" id="GO:0005185">
    <property type="term" value="F:neurohypophyseal hormone activity"/>
    <property type="evidence" value="ECO:0007669"/>
    <property type="project" value="InterPro"/>
</dbReference>
<dbReference type="InterPro" id="IPR022423">
    <property type="entry name" value="Neurohypophysial_hormone_CS"/>
</dbReference>
<dbReference type="PROSITE" id="PS00264">
    <property type="entry name" value="NEUROHYPOPHYS_HORM"/>
    <property type="match status" value="1"/>
</dbReference>
<protein>
    <recommendedName>
        <fullName>Glumitocin</fullName>
    </recommendedName>
</protein>
<reference key="1">
    <citation type="journal article" date="1965" name="Biochim. Biophys. Acta">
        <title>Phylogeny of neurophyophyseal peptides: isolation of a new hormone, glumitocin (Ser 4-Gln 8-ocytocin) present in a cartilaginous fish, the ray (Raia clavata).</title>
        <authorList>
            <person name="Acher R."/>
            <person name="Chauvet J."/>
            <person name="Chauvet M.-T."/>
            <person name="Crepy D."/>
        </authorList>
    </citation>
    <scope>PROTEIN SEQUENCE</scope>
    <scope>AMIDATION AT GLY-9</scope>
</reference>
<organism>
    <name type="scientific">Raja clavata</name>
    <name type="common">Thornback ray</name>
    <dbReference type="NCBI Taxonomy" id="7781"/>
    <lineage>
        <taxon>Eukaryota</taxon>
        <taxon>Metazoa</taxon>
        <taxon>Chordata</taxon>
        <taxon>Craniata</taxon>
        <taxon>Vertebrata</taxon>
        <taxon>Chondrichthyes</taxon>
        <taxon>Elasmobranchii</taxon>
        <taxon>Batoidea</taxon>
        <taxon>Rajiformes</taxon>
        <taxon>Rajidae</taxon>
        <taxon>Raja</taxon>
    </lineage>
</organism>
<comment type="function">
    <text>Antidiuretic hormone.</text>
</comment>
<comment type="subcellular location">
    <subcellularLocation>
        <location>Secreted</location>
    </subcellularLocation>
</comment>
<comment type="similarity">
    <text evidence="2">Belongs to the vasopressin/oxytocin family.</text>
</comment>
<evidence type="ECO:0000269" key="1">
    <source>
    </source>
</evidence>
<evidence type="ECO:0000305" key="2"/>
<accession>P42994</accession>
<feature type="peptide" id="PRO_0000044090" description="Glumitocin">
    <location>
        <begin position="1"/>
        <end position="9"/>
    </location>
</feature>
<feature type="modified residue" description="Glycine amide" evidence="1">
    <location>
        <position position="9"/>
    </location>
</feature>
<feature type="disulfide bond">
    <location>
        <begin position="1"/>
        <end position="6"/>
    </location>
</feature>
<keyword id="KW-0027">Amidation</keyword>
<keyword id="KW-0903">Direct protein sequencing</keyword>
<keyword id="KW-1015">Disulfide bond</keyword>
<keyword id="KW-0372">Hormone</keyword>
<keyword id="KW-0964">Secreted</keyword>
<sequence length="9" mass="984">CYISNCPQG</sequence>